<accession>O02639</accession>
<organism>
    <name type="scientific">Caenorhabditis elegans</name>
    <dbReference type="NCBI Taxonomy" id="6239"/>
    <lineage>
        <taxon>Eukaryota</taxon>
        <taxon>Metazoa</taxon>
        <taxon>Ecdysozoa</taxon>
        <taxon>Nematoda</taxon>
        <taxon>Chromadorea</taxon>
        <taxon>Rhabditida</taxon>
        <taxon>Rhabditina</taxon>
        <taxon>Rhabditomorpha</taxon>
        <taxon>Rhabditoidea</taxon>
        <taxon>Rhabditidae</taxon>
        <taxon>Peloderinae</taxon>
        <taxon>Caenorhabditis</taxon>
    </lineage>
</organism>
<protein>
    <recommendedName>
        <fullName evidence="2">Large ribosomal subunit protein eL19</fullName>
    </recommendedName>
    <alternativeName>
        <fullName>60S ribosomal protein L19</fullName>
    </alternativeName>
</protein>
<comment type="similarity">
    <text evidence="2">Belongs to the eukaryotic ribosomal protein eL19 family.</text>
</comment>
<dbReference type="EMBL" id="FO080461">
    <property type="protein sequence ID" value="CCD63892.1"/>
    <property type="molecule type" value="Genomic_DNA"/>
</dbReference>
<dbReference type="PIR" id="T29135">
    <property type="entry name" value="T29135"/>
</dbReference>
<dbReference type="RefSeq" id="NP_491608.1">
    <property type="nucleotide sequence ID" value="NM_059207.9"/>
</dbReference>
<dbReference type="PDB" id="9BH5">
    <property type="method" value="EM"/>
    <property type="resolution" value="2.63 A"/>
    <property type="chains" value="CR=1-198"/>
</dbReference>
<dbReference type="PDB" id="9CAI">
    <property type="method" value="EM"/>
    <property type="resolution" value="2.59 A"/>
    <property type="chains" value="CR=1-198"/>
</dbReference>
<dbReference type="PDBsum" id="9BH5"/>
<dbReference type="PDBsum" id="9CAI"/>
<dbReference type="EMDB" id="EMD-44533"/>
<dbReference type="EMDB" id="EMD-45392"/>
<dbReference type="SMR" id="O02639"/>
<dbReference type="BioGRID" id="37659">
    <property type="interactions" value="103"/>
</dbReference>
<dbReference type="DIP" id="DIP-25603N"/>
<dbReference type="FunCoup" id="O02639">
    <property type="interactions" value="2322"/>
</dbReference>
<dbReference type="IntAct" id="O02639">
    <property type="interactions" value="3"/>
</dbReference>
<dbReference type="STRING" id="6239.C09D4.5.2"/>
<dbReference type="iPTMnet" id="O02639"/>
<dbReference type="PaxDb" id="6239-C09D4.5.1"/>
<dbReference type="PeptideAtlas" id="O02639"/>
<dbReference type="EnsemblMetazoa" id="C09D4.5.1">
    <property type="protein sequence ID" value="C09D4.5.1"/>
    <property type="gene ID" value="WBGene00004431"/>
</dbReference>
<dbReference type="EnsemblMetazoa" id="C09D4.5.2">
    <property type="protein sequence ID" value="C09D4.5.2"/>
    <property type="gene ID" value="WBGene00004431"/>
</dbReference>
<dbReference type="GeneID" id="172201"/>
<dbReference type="KEGG" id="cel:CELE_C09D4.5"/>
<dbReference type="UCSC" id="C09D4.5.1">
    <property type="organism name" value="c. elegans"/>
</dbReference>
<dbReference type="AGR" id="WB:WBGene00004431"/>
<dbReference type="CTD" id="172201"/>
<dbReference type="WormBase" id="C09D4.5">
    <property type="protein sequence ID" value="CE08034"/>
    <property type="gene ID" value="WBGene00004431"/>
    <property type="gene designation" value="rpl-19"/>
</dbReference>
<dbReference type="eggNOG" id="KOG1696">
    <property type="taxonomic scope" value="Eukaryota"/>
</dbReference>
<dbReference type="GeneTree" id="ENSGT00390000012628"/>
<dbReference type="HOGENOM" id="CLU_083919_0_1_1"/>
<dbReference type="InParanoid" id="O02639"/>
<dbReference type="OMA" id="NRVWIDP"/>
<dbReference type="OrthoDB" id="5407653at2759"/>
<dbReference type="PhylomeDB" id="O02639"/>
<dbReference type="Reactome" id="R-CEL-156827">
    <property type="pathway name" value="L13a-mediated translational silencing of Ceruloplasmin expression"/>
</dbReference>
<dbReference type="Reactome" id="R-CEL-1799339">
    <property type="pathway name" value="SRP-dependent cotranslational protein targeting to membrane"/>
</dbReference>
<dbReference type="Reactome" id="R-CEL-72689">
    <property type="pathway name" value="Formation of a pool of free 40S subunits"/>
</dbReference>
<dbReference type="Reactome" id="R-CEL-72706">
    <property type="pathway name" value="GTP hydrolysis and joining of the 60S ribosomal subunit"/>
</dbReference>
<dbReference type="Reactome" id="R-CEL-975956">
    <property type="pathway name" value="Nonsense Mediated Decay (NMD) independent of the Exon Junction Complex (EJC)"/>
</dbReference>
<dbReference type="Reactome" id="R-CEL-975957">
    <property type="pathway name" value="Nonsense Mediated Decay (NMD) enhanced by the Exon Junction Complex (EJC)"/>
</dbReference>
<dbReference type="SignaLink" id="O02639"/>
<dbReference type="PRO" id="PR:O02639"/>
<dbReference type="Proteomes" id="UP000001940">
    <property type="component" value="Chromosome I"/>
</dbReference>
<dbReference type="Bgee" id="WBGene00004431">
    <property type="expression patterns" value="Expressed in germ line (C elegans) and 4 other cell types or tissues"/>
</dbReference>
<dbReference type="GO" id="GO:0022625">
    <property type="term" value="C:cytosolic large ribosomal subunit"/>
    <property type="evidence" value="ECO:0000318"/>
    <property type="project" value="GO_Central"/>
</dbReference>
<dbReference type="GO" id="GO:0003723">
    <property type="term" value="F:RNA binding"/>
    <property type="evidence" value="ECO:0000318"/>
    <property type="project" value="GO_Central"/>
</dbReference>
<dbReference type="GO" id="GO:0003735">
    <property type="term" value="F:structural constituent of ribosome"/>
    <property type="evidence" value="ECO:0000318"/>
    <property type="project" value="GO_Central"/>
</dbReference>
<dbReference type="GO" id="GO:0008340">
    <property type="term" value="P:determination of adult lifespan"/>
    <property type="evidence" value="ECO:0000315"/>
    <property type="project" value="WormBase"/>
</dbReference>
<dbReference type="GO" id="GO:0006412">
    <property type="term" value="P:translation"/>
    <property type="evidence" value="ECO:0007669"/>
    <property type="project" value="InterPro"/>
</dbReference>
<dbReference type="CDD" id="cd01417">
    <property type="entry name" value="Ribosomal_L19e_E"/>
    <property type="match status" value="1"/>
</dbReference>
<dbReference type="FunFam" id="1.10.1200.240:FF:000001">
    <property type="entry name" value="Ribosomal protein L19"/>
    <property type="match status" value="1"/>
</dbReference>
<dbReference type="FunFam" id="1.10.1650.10:FF:000001">
    <property type="entry name" value="Ribosomal protein L19"/>
    <property type="match status" value="1"/>
</dbReference>
<dbReference type="Gene3D" id="1.10.1200.240">
    <property type="match status" value="1"/>
</dbReference>
<dbReference type="Gene3D" id="1.10.1650.10">
    <property type="match status" value="1"/>
</dbReference>
<dbReference type="HAMAP" id="MF_01475">
    <property type="entry name" value="Ribosomal_eL19"/>
    <property type="match status" value="1"/>
</dbReference>
<dbReference type="InterPro" id="IPR035970">
    <property type="entry name" value="60S_ribosomal_eL19_sf"/>
</dbReference>
<dbReference type="InterPro" id="IPR039547">
    <property type="entry name" value="Ribosomal_eL19"/>
</dbReference>
<dbReference type="InterPro" id="IPR023638">
    <property type="entry name" value="Ribosomal_eL19_CS"/>
</dbReference>
<dbReference type="InterPro" id="IPR000196">
    <property type="entry name" value="Ribosomal_eL19_dom"/>
</dbReference>
<dbReference type="InterPro" id="IPR015972">
    <property type="entry name" value="Ribosomal_eL19_dom1"/>
</dbReference>
<dbReference type="InterPro" id="IPR033935">
    <property type="entry name" value="Ribosomal_eL19_euk"/>
</dbReference>
<dbReference type="NCBIfam" id="NF006343">
    <property type="entry name" value="PRK08570.1"/>
    <property type="match status" value="1"/>
</dbReference>
<dbReference type="PANTHER" id="PTHR10722">
    <property type="entry name" value="60S RIBOSOMAL PROTEIN L19"/>
    <property type="match status" value="1"/>
</dbReference>
<dbReference type="Pfam" id="PF01280">
    <property type="entry name" value="Ribosomal_L19e"/>
    <property type="match status" value="1"/>
</dbReference>
<dbReference type="Pfam" id="PF25476">
    <property type="entry name" value="Ribosomal_L19e_C"/>
    <property type="match status" value="1"/>
</dbReference>
<dbReference type="SMART" id="SM01416">
    <property type="entry name" value="Ribosomal_L19e"/>
    <property type="match status" value="1"/>
</dbReference>
<dbReference type="SUPFAM" id="SSF48140">
    <property type="entry name" value="Ribosomal protein L19 (L19e)"/>
    <property type="match status" value="1"/>
</dbReference>
<dbReference type="PROSITE" id="PS00526">
    <property type="entry name" value="RIBOSOMAL_L19E"/>
    <property type="match status" value="1"/>
</dbReference>
<proteinExistence type="evidence at protein level"/>
<feature type="chain" id="PRO_0000131176" description="Large ribosomal subunit protein eL19">
    <location>
        <begin position="1"/>
        <end position="198"/>
    </location>
</feature>
<feature type="region of interest" description="Disordered" evidence="1">
    <location>
        <begin position="66"/>
        <end position="85"/>
    </location>
</feature>
<feature type="region of interest" description="Disordered" evidence="1">
    <location>
        <begin position="150"/>
        <end position="177"/>
    </location>
</feature>
<feature type="compositionally biased region" description="Basic residues" evidence="1">
    <location>
        <begin position="71"/>
        <end position="83"/>
    </location>
</feature>
<feature type="compositionally biased region" description="Basic and acidic residues" evidence="1">
    <location>
        <begin position="160"/>
        <end position="177"/>
    </location>
</feature>
<gene>
    <name type="primary">rpl-19</name>
    <name type="ORF">C09D4.5</name>
</gene>
<keyword id="KW-0002">3D-structure</keyword>
<keyword id="KW-1185">Reference proteome</keyword>
<keyword id="KW-0687">Ribonucleoprotein</keyword>
<keyword id="KW-0689">Ribosomal protein</keyword>
<evidence type="ECO:0000256" key="1">
    <source>
        <dbReference type="SAM" id="MobiDB-lite"/>
    </source>
</evidence>
<evidence type="ECO:0000305" key="2"/>
<reference key="1">
    <citation type="journal article" date="1998" name="Science">
        <title>Genome sequence of the nematode C. elegans: a platform for investigating biology.</title>
        <authorList>
            <consortium name="The C. elegans sequencing consortium"/>
        </authorList>
    </citation>
    <scope>NUCLEOTIDE SEQUENCE [LARGE SCALE GENOMIC DNA]</scope>
    <source>
        <strain>Bristol N2</strain>
    </source>
</reference>
<name>RL19_CAEEL</name>
<sequence>MSNLRLQKRLASAVLKCGKHRVWLDPNEVSEISGANSRQSIRRLVNDGLIIRKPVTVHSRFRAREYEEARRKGRHTGYGKRRGTANARMPEKTLWIRRMRVLRNLLRRYRDAKKLDKHLYHELYLRAKGNNFKNKKNLIEYIFKKKTENKRAKQLADQAQARRDKNKESRKRREERQVVKRAELLRKISQSEKVIAGK</sequence>